<protein>
    <recommendedName>
        <fullName>HTH-type transcriptional regulator MgrA</fullName>
    </recommendedName>
</protein>
<feature type="initiator methionine" description="Removed" evidence="1">
    <location>
        <position position="1"/>
    </location>
</feature>
<feature type="chain" id="PRO_0000054371" description="HTH-type transcriptional regulator MgrA">
    <location>
        <begin position="2"/>
        <end position="147"/>
    </location>
</feature>
<feature type="domain" description="HTH marR-type" evidence="2">
    <location>
        <begin position="8"/>
        <end position="139"/>
    </location>
</feature>
<feature type="DNA-binding region" description="H-T-H motif" evidence="2">
    <location>
        <begin position="55"/>
        <end position="78"/>
    </location>
</feature>
<gene>
    <name type="primary">mgrA</name>
    <name type="synonym">norR</name>
    <name type="ordered locus">SAS0651</name>
</gene>
<dbReference type="EMBL" id="BX571857">
    <property type="protein sequence ID" value="CAG42427.1"/>
    <property type="molecule type" value="Genomic_DNA"/>
</dbReference>
<dbReference type="RefSeq" id="WP_001283444.1">
    <property type="nucleotide sequence ID" value="NC_002953.3"/>
</dbReference>
<dbReference type="SMR" id="Q6GBE4"/>
<dbReference type="GeneID" id="98345028"/>
<dbReference type="KEGG" id="sas:SAS0651"/>
<dbReference type="HOGENOM" id="CLU_083287_3_2_9"/>
<dbReference type="GO" id="GO:0005737">
    <property type="term" value="C:cytoplasm"/>
    <property type="evidence" value="ECO:0007669"/>
    <property type="project" value="UniProtKB-SubCell"/>
</dbReference>
<dbReference type="GO" id="GO:0003677">
    <property type="term" value="F:DNA binding"/>
    <property type="evidence" value="ECO:0007669"/>
    <property type="project" value="UniProtKB-KW"/>
</dbReference>
<dbReference type="GO" id="GO:0003700">
    <property type="term" value="F:DNA-binding transcription factor activity"/>
    <property type="evidence" value="ECO:0007669"/>
    <property type="project" value="InterPro"/>
</dbReference>
<dbReference type="GO" id="GO:0006950">
    <property type="term" value="P:response to stress"/>
    <property type="evidence" value="ECO:0007669"/>
    <property type="project" value="TreeGrafter"/>
</dbReference>
<dbReference type="FunFam" id="1.10.10.10:FF:000163">
    <property type="entry name" value="MarR family transcriptional regulator"/>
    <property type="match status" value="1"/>
</dbReference>
<dbReference type="Gene3D" id="1.10.10.10">
    <property type="entry name" value="Winged helix-like DNA-binding domain superfamily/Winged helix DNA-binding domain"/>
    <property type="match status" value="1"/>
</dbReference>
<dbReference type="InterPro" id="IPR000835">
    <property type="entry name" value="HTH_MarR-typ"/>
</dbReference>
<dbReference type="InterPro" id="IPR039422">
    <property type="entry name" value="MarR/SlyA-like"/>
</dbReference>
<dbReference type="InterPro" id="IPR055166">
    <property type="entry name" value="Transc_reg_Sar_Rot_HTH"/>
</dbReference>
<dbReference type="InterPro" id="IPR023187">
    <property type="entry name" value="Tscrpt_reg_MarR-type_CS"/>
</dbReference>
<dbReference type="InterPro" id="IPR036388">
    <property type="entry name" value="WH-like_DNA-bd_sf"/>
</dbReference>
<dbReference type="InterPro" id="IPR036390">
    <property type="entry name" value="WH_DNA-bd_sf"/>
</dbReference>
<dbReference type="PANTHER" id="PTHR33164:SF5">
    <property type="entry name" value="ORGANIC HYDROPEROXIDE RESISTANCE TRANSCRIPTIONAL REGULATOR"/>
    <property type="match status" value="1"/>
</dbReference>
<dbReference type="PANTHER" id="PTHR33164">
    <property type="entry name" value="TRANSCRIPTIONAL REGULATOR, MARR FAMILY"/>
    <property type="match status" value="1"/>
</dbReference>
<dbReference type="Pfam" id="PF22381">
    <property type="entry name" value="Staph_reg_Sar_Rot"/>
    <property type="match status" value="1"/>
</dbReference>
<dbReference type="SMART" id="SM00347">
    <property type="entry name" value="HTH_MARR"/>
    <property type="match status" value="1"/>
</dbReference>
<dbReference type="SUPFAM" id="SSF46785">
    <property type="entry name" value="Winged helix' DNA-binding domain"/>
    <property type="match status" value="1"/>
</dbReference>
<dbReference type="PROSITE" id="PS01117">
    <property type="entry name" value="HTH_MARR_1"/>
    <property type="match status" value="1"/>
</dbReference>
<dbReference type="PROSITE" id="PS50995">
    <property type="entry name" value="HTH_MARR_2"/>
    <property type="match status" value="1"/>
</dbReference>
<proteinExistence type="inferred from homology"/>
<comment type="function">
    <text evidence="1">Regulatory protein involved in autolytic activity, multidrug resistance and virulence.</text>
</comment>
<comment type="subcellular location">
    <subcellularLocation>
        <location evidence="3">Cytoplasm</location>
    </subcellularLocation>
</comment>
<reference key="1">
    <citation type="journal article" date="2004" name="Proc. Natl. Acad. Sci. U.S.A.">
        <title>Complete genomes of two clinical Staphylococcus aureus strains: evidence for the rapid evolution of virulence and drug resistance.</title>
        <authorList>
            <person name="Holden M.T.G."/>
            <person name="Feil E.J."/>
            <person name="Lindsay J.A."/>
            <person name="Peacock S.J."/>
            <person name="Day N.P.J."/>
            <person name="Enright M.C."/>
            <person name="Foster T.J."/>
            <person name="Moore C.E."/>
            <person name="Hurst L."/>
            <person name="Atkin R."/>
            <person name="Barron A."/>
            <person name="Bason N."/>
            <person name="Bentley S.D."/>
            <person name="Chillingworth C."/>
            <person name="Chillingworth T."/>
            <person name="Churcher C."/>
            <person name="Clark L."/>
            <person name="Corton C."/>
            <person name="Cronin A."/>
            <person name="Doggett J."/>
            <person name="Dowd L."/>
            <person name="Feltwell T."/>
            <person name="Hance Z."/>
            <person name="Harris B."/>
            <person name="Hauser H."/>
            <person name="Holroyd S."/>
            <person name="Jagels K."/>
            <person name="James K.D."/>
            <person name="Lennard N."/>
            <person name="Line A."/>
            <person name="Mayes R."/>
            <person name="Moule S."/>
            <person name="Mungall K."/>
            <person name="Ormond D."/>
            <person name="Quail M.A."/>
            <person name="Rabbinowitsch E."/>
            <person name="Rutherford K.M."/>
            <person name="Sanders M."/>
            <person name="Sharp S."/>
            <person name="Simmonds M."/>
            <person name="Stevens K."/>
            <person name="Whitehead S."/>
            <person name="Barrell B.G."/>
            <person name="Spratt B.G."/>
            <person name="Parkhill J."/>
        </authorList>
    </citation>
    <scope>NUCLEOTIDE SEQUENCE [LARGE SCALE GENOMIC DNA]</scope>
    <source>
        <strain>MSSA476</strain>
    </source>
</reference>
<keyword id="KW-0010">Activator</keyword>
<keyword id="KW-0963">Cytoplasm</keyword>
<keyword id="KW-0238">DNA-binding</keyword>
<keyword id="KW-0678">Repressor</keyword>
<keyword id="KW-0804">Transcription</keyword>
<keyword id="KW-0805">Transcription regulation</keyword>
<keyword id="KW-0843">Virulence</keyword>
<accession>Q6GBE4</accession>
<sequence>MSDQHNLKEQLCFSLYNAQRQVNRYYSNKVFKKYNLTYPQFLVLTILWDESPVNVKKVVTELALDTGTVSPLLKRMEQVDLIKRERSEVDQREVFIHLTDKSETIRPELSNASDKVASASSLSQDEVKELNRLLGKVIHAFDETKEK</sequence>
<organism>
    <name type="scientific">Staphylococcus aureus (strain MSSA476)</name>
    <dbReference type="NCBI Taxonomy" id="282459"/>
    <lineage>
        <taxon>Bacteria</taxon>
        <taxon>Bacillati</taxon>
        <taxon>Bacillota</taxon>
        <taxon>Bacilli</taxon>
        <taxon>Bacillales</taxon>
        <taxon>Staphylococcaceae</taxon>
        <taxon>Staphylococcus</taxon>
    </lineage>
</organism>
<name>MGRA_STAAS</name>
<evidence type="ECO:0000250" key="1"/>
<evidence type="ECO:0000255" key="2">
    <source>
        <dbReference type="PROSITE-ProRule" id="PRU00345"/>
    </source>
</evidence>
<evidence type="ECO:0000305" key="3"/>